<name>YR423_MIMIV</name>
<keyword id="KW-0175">Coiled coil</keyword>
<keyword id="KW-1185">Reference proteome</keyword>
<dbReference type="EMBL" id="AY653733">
    <property type="protein sequence ID" value="AAV50692.1"/>
    <property type="molecule type" value="Genomic_DNA"/>
</dbReference>
<dbReference type="SMR" id="Q5UQL9"/>
<dbReference type="KEGG" id="vg:9925044"/>
<dbReference type="OrthoDB" id="12748at10239"/>
<dbReference type="Proteomes" id="UP000001134">
    <property type="component" value="Genome"/>
</dbReference>
<dbReference type="Gene3D" id="3.30.40.220">
    <property type="match status" value="2"/>
</dbReference>
<reference key="1">
    <citation type="journal article" date="2004" name="Science">
        <title>The 1.2-megabase genome sequence of Mimivirus.</title>
        <authorList>
            <person name="Raoult D."/>
            <person name="Audic S."/>
            <person name="Robert C."/>
            <person name="Abergel C."/>
            <person name="Renesto P."/>
            <person name="Ogata H."/>
            <person name="La Scola B."/>
            <person name="Susan M."/>
            <person name="Claverie J.-M."/>
        </authorList>
    </citation>
    <scope>NUCLEOTIDE SEQUENCE [LARGE SCALE GENOMIC DNA]</scope>
    <source>
        <strain>Rowbotham-Bradford</strain>
    </source>
</reference>
<sequence length="530" mass="62410">MSGNVCNRCNDGLMVNYPFLSCQKCIYLAKKNNKCLGVSIKGKHCPYKPNSNCGNIFCKNHTNQFRLHGKAHTHKLCSSGNDCFREDVTIKNLKQILPIDYPFAQCETCRNNERSYFNNKQQRVKQHNAESKDTMICKKCFVELPTNKFPKTSRGKISHYCKSCFDKRAIIERNRIIDPIKERERSKKYENRPDIKQKRKKYRQCKVVKIRNAISLKKSREKLRAADPENYLKKKAEQQAKHRQKYPEKNGITTIRYNTISSDKYMRYKSVAIEKGLEFTLTKQEFEKLVESNCYYCDCKYKNTINGIDRINNNVGYILDNCVTACSMCNNMKNTLNVETFIVMCMTIANYFKYYRTDIFVNVFNNYESASYNNYKNRALKKDLEFQLSNKEFKELQQKPCYLCGRKSNDKHTNGVDRVCNEEGYIPTNCRSCCGDCNYLKKDYKLDNVVFRCAFIALMHKNNAKKLQDDWKPSRFHESNDKKLSKEENREIKLSIRENKEKQRKKSVEKSVSKLQNQLNRLLNKNTIEV</sequence>
<proteinExistence type="predicted"/>
<organismHost>
    <name type="scientific">Acanthamoeba polyphaga</name>
    <name type="common">Amoeba</name>
    <dbReference type="NCBI Taxonomy" id="5757"/>
</organismHost>
<feature type="chain" id="PRO_0000309201" description="Uncharacterized protein R423">
    <location>
        <begin position="1"/>
        <end position="530"/>
    </location>
</feature>
<feature type="coiled-coil region" evidence="1">
    <location>
        <begin position="485"/>
        <end position="529"/>
    </location>
</feature>
<accession>Q5UQL9</accession>
<gene>
    <name type="ordered locus">MIMI_R423</name>
</gene>
<protein>
    <recommendedName>
        <fullName>Uncharacterized protein R423</fullName>
    </recommendedName>
</protein>
<organism>
    <name type="scientific">Acanthamoeba polyphaga mimivirus</name>
    <name type="common">APMV</name>
    <dbReference type="NCBI Taxonomy" id="212035"/>
    <lineage>
        <taxon>Viruses</taxon>
        <taxon>Varidnaviria</taxon>
        <taxon>Bamfordvirae</taxon>
        <taxon>Nucleocytoviricota</taxon>
        <taxon>Megaviricetes</taxon>
        <taxon>Imitervirales</taxon>
        <taxon>Mimiviridae</taxon>
        <taxon>Megamimivirinae</taxon>
        <taxon>Mimivirus</taxon>
        <taxon>Mimivirus bradfordmassiliense</taxon>
    </lineage>
</organism>
<evidence type="ECO:0000255" key="1"/>